<dbReference type="EMBL" id="D85613">
    <property type="status" value="NOT_ANNOTATED_CDS"/>
    <property type="molecule type" value="Genomic_DNA"/>
</dbReference>
<dbReference type="EMBL" id="U73857">
    <property type="protein sequence ID" value="AAB18078.1"/>
    <property type="status" value="ALT_INIT"/>
    <property type="molecule type" value="Genomic_DNA"/>
</dbReference>
<dbReference type="EMBL" id="U00096">
    <property type="protein sequence ID" value="AAC73457.2"/>
    <property type="molecule type" value="Genomic_DNA"/>
</dbReference>
<dbReference type="EMBL" id="AP009048">
    <property type="protein sequence ID" value="BAE76136.1"/>
    <property type="molecule type" value="Genomic_DNA"/>
</dbReference>
<dbReference type="PIR" id="B64763">
    <property type="entry name" value="B64763"/>
</dbReference>
<dbReference type="RefSeq" id="NP_414888.4">
    <property type="nucleotide sequence ID" value="NC_000913.3"/>
</dbReference>
<dbReference type="RefSeq" id="WP_001096705.1">
    <property type="nucleotide sequence ID" value="NZ_STEB01000036.1"/>
</dbReference>
<dbReference type="SMR" id="P51024"/>
<dbReference type="BioGRID" id="4261623">
    <property type="interactions" value="20"/>
</dbReference>
<dbReference type="DIP" id="DIP-11273N"/>
<dbReference type="FunCoup" id="P51024">
    <property type="interactions" value="57"/>
</dbReference>
<dbReference type="IntAct" id="P51024">
    <property type="interactions" value="5"/>
</dbReference>
<dbReference type="STRING" id="511145.b0354"/>
<dbReference type="jPOST" id="P51024"/>
<dbReference type="PaxDb" id="511145-b0354"/>
<dbReference type="EnsemblBacteria" id="AAC73457">
    <property type="protein sequence ID" value="AAC73457"/>
    <property type="gene ID" value="b0354"/>
</dbReference>
<dbReference type="GeneID" id="944993"/>
<dbReference type="KEGG" id="ecj:JW0345"/>
<dbReference type="KEGG" id="eco:b0354"/>
<dbReference type="KEGG" id="ecoc:C3026_01745"/>
<dbReference type="KEGG" id="ecoc:C3026_24905"/>
<dbReference type="PATRIC" id="fig|511145.12.peg.364"/>
<dbReference type="EchoBASE" id="EB3079"/>
<dbReference type="eggNOG" id="COG3122">
    <property type="taxonomic scope" value="Bacteria"/>
</dbReference>
<dbReference type="HOGENOM" id="CLU_098678_0_0_6"/>
<dbReference type="InParanoid" id="P51024"/>
<dbReference type="OMA" id="EMNRITV"/>
<dbReference type="OrthoDB" id="5294470at2"/>
<dbReference type="PhylomeDB" id="P51024"/>
<dbReference type="BioCyc" id="EcoCyc:G6207-MONOMER"/>
<dbReference type="PRO" id="PR:P51024"/>
<dbReference type="Proteomes" id="UP000000625">
    <property type="component" value="Chromosome"/>
</dbReference>
<dbReference type="GO" id="GO:0005829">
    <property type="term" value="C:cytosol"/>
    <property type="evidence" value="ECO:0000314"/>
    <property type="project" value="EcoCyc"/>
</dbReference>
<dbReference type="InterPro" id="IPR018636">
    <property type="entry name" value="DUF2058"/>
</dbReference>
<dbReference type="Pfam" id="PF09831">
    <property type="entry name" value="DUF2058"/>
    <property type="match status" value="1"/>
</dbReference>
<reference key="1">
    <citation type="submission" date="1996-05" db="EMBL/GenBank/DDBJ databases">
        <authorList>
            <person name="Nashimoto H."/>
            <person name="Saito N."/>
        </authorList>
    </citation>
    <scope>NUCLEOTIDE SEQUENCE [GENOMIC DNA]</scope>
    <source>
        <strain>K12</strain>
    </source>
</reference>
<reference key="2">
    <citation type="submission" date="1997-01" db="EMBL/GenBank/DDBJ databases">
        <title>Sequence of minutes 4-25 of Escherichia coli.</title>
        <authorList>
            <person name="Chung E."/>
            <person name="Allen E."/>
            <person name="Araujo R."/>
            <person name="Aparicio A.M."/>
            <person name="Davis K."/>
            <person name="Duncan M."/>
            <person name="Federspiel N."/>
            <person name="Hyman R."/>
            <person name="Kalman S."/>
            <person name="Komp C."/>
            <person name="Kurdi O."/>
            <person name="Lew H."/>
            <person name="Lin D."/>
            <person name="Namath A."/>
            <person name="Oefner P."/>
            <person name="Roberts D."/>
            <person name="Schramm S."/>
            <person name="Davis R.W."/>
        </authorList>
    </citation>
    <scope>NUCLEOTIDE SEQUENCE [LARGE SCALE GENOMIC DNA]</scope>
    <source>
        <strain>K12 / MG1655 / ATCC 47076</strain>
    </source>
</reference>
<reference key="3">
    <citation type="journal article" date="1997" name="Science">
        <title>The complete genome sequence of Escherichia coli K-12.</title>
        <authorList>
            <person name="Blattner F.R."/>
            <person name="Plunkett G. III"/>
            <person name="Bloch C.A."/>
            <person name="Perna N.T."/>
            <person name="Burland V."/>
            <person name="Riley M."/>
            <person name="Collado-Vides J."/>
            <person name="Glasner J.D."/>
            <person name="Rode C.K."/>
            <person name="Mayhew G.F."/>
            <person name="Gregor J."/>
            <person name="Davis N.W."/>
            <person name="Kirkpatrick H.A."/>
            <person name="Goeden M.A."/>
            <person name="Rose D.J."/>
            <person name="Mau B."/>
            <person name="Shao Y."/>
        </authorList>
    </citation>
    <scope>NUCLEOTIDE SEQUENCE [LARGE SCALE GENOMIC DNA]</scope>
    <source>
        <strain>K12 / MG1655 / ATCC 47076</strain>
    </source>
</reference>
<reference key="4">
    <citation type="journal article" date="2006" name="Mol. Syst. Biol.">
        <title>Highly accurate genome sequences of Escherichia coli K-12 strains MG1655 and W3110.</title>
        <authorList>
            <person name="Hayashi K."/>
            <person name="Morooka N."/>
            <person name="Yamamoto Y."/>
            <person name="Fujita K."/>
            <person name="Isono K."/>
            <person name="Choi S."/>
            <person name="Ohtsubo E."/>
            <person name="Baba T."/>
            <person name="Wanner B.L."/>
            <person name="Mori H."/>
            <person name="Horiuchi T."/>
        </authorList>
    </citation>
    <scope>NUCLEOTIDE SEQUENCE [LARGE SCALE GENOMIC DNA]</scope>
    <source>
        <strain>K12 / W3110 / ATCC 27325 / DSM 5911</strain>
    </source>
</reference>
<reference key="5">
    <citation type="unpublished observations" date="1996-03">
        <authorList>
            <person name="Rudd K.E."/>
        </authorList>
    </citation>
    <scope>IDENTIFICATION</scope>
</reference>
<protein>
    <recommendedName>
        <fullName>Uncharacterized protein YaiL</fullName>
    </recommendedName>
</protein>
<evidence type="ECO:0000256" key="1">
    <source>
        <dbReference type="SAM" id="MobiDB-lite"/>
    </source>
</evidence>
<evidence type="ECO:0000305" key="2"/>
<name>YAIL_ECOLI</name>
<feature type="chain" id="PRO_0000168590" description="Uncharacterized protein YaiL">
    <location>
        <begin position="1"/>
        <end position="179"/>
    </location>
</feature>
<feature type="region of interest" description="Disordered" evidence="1">
    <location>
        <begin position="27"/>
        <end position="54"/>
    </location>
</feature>
<comment type="sequence caution" evidence="2">
    <conflict type="erroneous initiation">
        <sequence resource="EMBL-CDS" id="AAB18078"/>
    </conflict>
    <text>Extended N-terminus.</text>
</comment>
<comment type="sequence caution" evidence="2">
    <conflict type="frameshift">
        <sequence resource="EMBL" id="D85613"/>
    </conflict>
</comment>
<keyword id="KW-1185">Reference proteome</keyword>
<organism>
    <name type="scientific">Escherichia coli (strain K12)</name>
    <dbReference type="NCBI Taxonomy" id="83333"/>
    <lineage>
        <taxon>Bacteria</taxon>
        <taxon>Pseudomonadati</taxon>
        <taxon>Pseudomonadota</taxon>
        <taxon>Gammaproteobacteria</taxon>
        <taxon>Enterobacterales</taxon>
        <taxon>Enterobacteriaceae</taxon>
        <taxon>Escherichia</taxon>
    </lineage>
</organism>
<proteinExistence type="predicted"/>
<accession>P51024</accession>
<accession>P77803</accession>
<accession>Q2MC70</accession>
<gene>
    <name type="primary">yaiL</name>
    <name type="ordered locus">b0354</name>
    <name type="ordered locus">JW0345</name>
</gene>
<sequence>MAKLTLQEQLLKAGLVTSKKAAKVERTAKKSRVQAREARAAVEENKKAQLERDKQLSEQQKQAALAKEYKAQVKQLIEMNRITIANGDIGFNFTDGNLIKKIFVDKLTQAQLINGRLAIARLLVDNNSEGEYAIIPASVADKIAQRDASSIVLHSALSAEEQDEDDPYADFKVPDDLMW</sequence>